<feature type="chain" id="PRO_0000384856" description="Uncharacterized protein ORF133">
    <location>
        <begin position="1"/>
        <end position="133"/>
    </location>
</feature>
<feature type="region of interest" description="Disordered" evidence="1">
    <location>
        <begin position="82"/>
        <end position="133"/>
    </location>
</feature>
<feature type="compositionally biased region" description="Polar residues" evidence="1">
    <location>
        <begin position="86"/>
        <end position="100"/>
    </location>
</feature>
<feature type="compositionally biased region" description="Low complexity" evidence="1">
    <location>
        <begin position="105"/>
        <end position="133"/>
    </location>
</feature>
<reference key="1">
    <citation type="journal article" date="2007" name="Virology">
        <title>Genome of the Acidianus bottle-shaped virus and insights into the replication and packaging mechanisms.</title>
        <authorList>
            <person name="Peng X."/>
            <person name="Basta T."/>
            <person name="Haring M."/>
            <person name="Garrett R.A."/>
            <person name="Prangishvili D."/>
        </authorList>
    </citation>
    <scope>NUCLEOTIDE SEQUENCE [GENOMIC DNA]</scope>
</reference>
<dbReference type="EMBL" id="EF432053">
    <property type="protein sequence ID" value="ABP73446.1"/>
    <property type="molecule type" value="Genomic_DNA"/>
</dbReference>
<dbReference type="RefSeq" id="YP_001210360.1">
    <property type="nucleotide sequence ID" value="NC_009452.1"/>
</dbReference>
<dbReference type="GeneID" id="5129815"/>
<dbReference type="KEGG" id="vg:5129815"/>
<dbReference type="Proteomes" id="UP000000513">
    <property type="component" value="Segment"/>
</dbReference>
<organismHost>
    <name type="scientific">Acidianus convivator</name>
    <dbReference type="NCBI Taxonomy" id="269667"/>
</organismHost>
<sequence length="133" mass="14961">MSMKEFVQKLDEIQASFSSHFPLVIINSNYKIDNGIVIFGKKGWLRINESVPIMINYGSLILLDTPKNYMVGVYKNVNGGRKIKSYSPSRSQKALNNPSKIRTKQTNNDTTIQQSNNTTSTNTKPSSNTNTQQ</sequence>
<accession>A4ZUE2</accession>
<evidence type="ECO:0000256" key="1">
    <source>
        <dbReference type="SAM" id="MobiDB-lite"/>
    </source>
</evidence>
<organism>
    <name type="scientific">Acidianus bottle-shaped virus (isolate Italy/Pozzuoli)</name>
    <name type="common">ABV</name>
    <dbReference type="NCBI Taxonomy" id="654911"/>
    <lineage>
        <taxon>Viruses</taxon>
        <taxon>Viruses incertae sedis</taxon>
        <taxon>Ampullaviridae</taxon>
        <taxon>Bottigliavirus</taxon>
        <taxon>Bottigliavirus ABV</taxon>
    </lineage>
</organism>
<name>Y133_ABVP</name>
<protein>
    <recommendedName>
        <fullName>Uncharacterized protein ORF133</fullName>
    </recommendedName>
</protein>
<proteinExistence type="predicted"/>
<keyword id="KW-1185">Reference proteome</keyword>
<gene>
    <name type="ORF">ORF133</name>
</gene>